<keyword id="KW-0687">Ribonucleoprotein</keyword>
<keyword id="KW-0689">Ribosomal protein</keyword>
<keyword id="KW-0694">RNA-binding</keyword>
<keyword id="KW-0699">rRNA-binding</keyword>
<organism>
    <name type="scientific">Lactobacillus delbrueckii subsp. bulgaricus (strain ATCC BAA-365 / Lb-18)</name>
    <dbReference type="NCBI Taxonomy" id="321956"/>
    <lineage>
        <taxon>Bacteria</taxon>
        <taxon>Bacillati</taxon>
        <taxon>Bacillota</taxon>
        <taxon>Bacilli</taxon>
        <taxon>Lactobacillales</taxon>
        <taxon>Lactobacillaceae</taxon>
        <taxon>Lactobacillus</taxon>
    </lineage>
</organism>
<sequence>MFVKTGDKVKVIAGSEKGKEGTVLSVNVKKNRVVVKGVNMIKKATKASASNANGGVVETEGSIHASNVKVIAKAESNKD</sequence>
<name>RL24_LACDB</name>
<evidence type="ECO:0000255" key="1">
    <source>
        <dbReference type="HAMAP-Rule" id="MF_01326"/>
    </source>
</evidence>
<evidence type="ECO:0000305" key="2"/>
<accession>Q04C04</accession>
<protein>
    <recommendedName>
        <fullName evidence="1">Large ribosomal subunit protein uL24</fullName>
    </recommendedName>
    <alternativeName>
        <fullName evidence="2">50S ribosomal protein L24</fullName>
    </alternativeName>
</protein>
<reference key="1">
    <citation type="journal article" date="2006" name="Proc. Natl. Acad. Sci. U.S.A.">
        <title>Comparative genomics of the lactic acid bacteria.</title>
        <authorList>
            <person name="Makarova K.S."/>
            <person name="Slesarev A."/>
            <person name="Wolf Y.I."/>
            <person name="Sorokin A."/>
            <person name="Mirkin B."/>
            <person name="Koonin E.V."/>
            <person name="Pavlov A."/>
            <person name="Pavlova N."/>
            <person name="Karamychev V."/>
            <person name="Polouchine N."/>
            <person name="Shakhova V."/>
            <person name="Grigoriev I."/>
            <person name="Lou Y."/>
            <person name="Rohksar D."/>
            <person name="Lucas S."/>
            <person name="Huang K."/>
            <person name="Goodstein D.M."/>
            <person name="Hawkins T."/>
            <person name="Plengvidhya V."/>
            <person name="Welker D."/>
            <person name="Hughes J."/>
            <person name="Goh Y."/>
            <person name="Benson A."/>
            <person name="Baldwin K."/>
            <person name="Lee J.-H."/>
            <person name="Diaz-Muniz I."/>
            <person name="Dosti B."/>
            <person name="Smeianov V."/>
            <person name="Wechter W."/>
            <person name="Barabote R."/>
            <person name="Lorca G."/>
            <person name="Altermann E."/>
            <person name="Barrangou R."/>
            <person name="Ganesan B."/>
            <person name="Xie Y."/>
            <person name="Rawsthorne H."/>
            <person name="Tamir D."/>
            <person name="Parker C."/>
            <person name="Breidt F."/>
            <person name="Broadbent J.R."/>
            <person name="Hutkins R."/>
            <person name="O'Sullivan D."/>
            <person name="Steele J."/>
            <person name="Unlu G."/>
            <person name="Saier M.H. Jr."/>
            <person name="Klaenhammer T."/>
            <person name="Richardson P."/>
            <person name="Kozyavkin S."/>
            <person name="Weimer B.C."/>
            <person name="Mills D.A."/>
        </authorList>
    </citation>
    <scope>NUCLEOTIDE SEQUENCE [LARGE SCALE GENOMIC DNA]</scope>
    <source>
        <strain>ATCC BAA-365 / Lb-18</strain>
    </source>
</reference>
<feature type="chain" id="PRO_1000052235" description="Large ribosomal subunit protein uL24">
    <location>
        <begin position="1"/>
        <end position="79"/>
    </location>
</feature>
<comment type="function">
    <text evidence="1">One of two assembly initiator proteins, it binds directly to the 5'-end of the 23S rRNA, where it nucleates assembly of the 50S subunit.</text>
</comment>
<comment type="function">
    <text evidence="1">One of the proteins that surrounds the polypeptide exit tunnel on the outside of the subunit.</text>
</comment>
<comment type="subunit">
    <text evidence="1">Part of the 50S ribosomal subunit.</text>
</comment>
<comment type="similarity">
    <text evidence="1">Belongs to the universal ribosomal protein uL24 family.</text>
</comment>
<dbReference type="EMBL" id="CP000412">
    <property type="protein sequence ID" value="ABJ58018.1"/>
    <property type="molecule type" value="Genomic_DNA"/>
</dbReference>
<dbReference type="RefSeq" id="WP_002878194.1">
    <property type="nucleotide sequence ID" value="NC_008529.1"/>
</dbReference>
<dbReference type="SMR" id="Q04C04"/>
<dbReference type="GeneID" id="69668437"/>
<dbReference type="KEGG" id="lbu:LBUL_0361"/>
<dbReference type="HOGENOM" id="CLU_093315_3_0_9"/>
<dbReference type="BioCyc" id="LDEL321956:LBUL_RS01690-MONOMER"/>
<dbReference type="GO" id="GO:1990904">
    <property type="term" value="C:ribonucleoprotein complex"/>
    <property type="evidence" value="ECO:0007669"/>
    <property type="project" value="UniProtKB-KW"/>
</dbReference>
<dbReference type="GO" id="GO:0005840">
    <property type="term" value="C:ribosome"/>
    <property type="evidence" value="ECO:0007669"/>
    <property type="project" value="UniProtKB-KW"/>
</dbReference>
<dbReference type="GO" id="GO:0019843">
    <property type="term" value="F:rRNA binding"/>
    <property type="evidence" value="ECO:0007669"/>
    <property type="project" value="UniProtKB-UniRule"/>
</dbReference>
<dbReference type="GO" id="GO:0003735">
    <property type="term" value="F:structural constituent of ribosome"/>
    <property type="evidence" value="ECO:0007669"/>
    <property type="project" value="InterPro"/>
</dbReference>
<dbReference type="GO" id="GO:0006412">
    <property type="term" value="P:translation"/>
    <property type="evidence" value="ECO:0007669"/>
    <property type="project" value="UniProtKB-UniRule"/>
</dbReference>
<dbReference type="CDD" id="cd06089">
    <property type="entry name" value="KOW_RPL26"/>
    <property type="match status" value="1"/>
</dbReference>
<dbReference type="Gene3D" id="2.30.30.30">
    <property type="match status" value="1"/>
</dbReference>
<dbReference type="HAMAP" id="MF_01326_B">
    <property type="entry name" value="Ribosomal_uL24_B"/>
    <property type="match status" value="1"/>
</dbReference>
<dbReference type="InterPro" id="IPR005824">
    <property type="entry name" value="KOW"/>
</dbReference>
<dbReference type="InterPro" id="IPR014722">
    <property type="entry name" value="Rib_uL2_dom2"/>
</dbReference>
<dbReference type="InterPro" id="IPR003256">
    <property type="entry name" value="Ribosomal_uL24"/>
</dbReference>
<dbReference type="InterPro" id="IPR005825">
    <property type="entry name" value="Ribosomal_uL24_CS"/>
</dbReference>
<dbReference type="InterPro" id="IPR041988">
    <property type="entry name" value="Ribosomal_uL24_KOW"/>
</dbReference>
<dbReference type="InterPro" id="IPR008991">
    <property type="entry name" value="Translation_prot_SH3-like_sf"/>
</dbReference>
<dbReference type="NCBIfam" id="TIGR01079">
    <property type="entry name" value="rplX_bact"/>
    <property type="match status" value="1"/>
</dbReference>
<dbReference type="PANTHER" id="PTHR12903">
    <property type="entry name" value="MITOCHONDRIAL RIBOSOMAL PROTEIN L24"/>
    <property type="match status" value="1"/>
</dbReference>
<dbReference type="Pfam" id="PF00467">
    <property type="entry name" value="KOW"/>
    <property type="match status" value="1"/>
</dbReference>
<dbReference type="Pfam" id="PF17136">
    <property type="entry name" value="ribosomal_L24"/>
    <property type="match status" value="1"/>
</dbReference>
<dbReference type="SMART" id="SM00739">
    <property type="entry name" value="KOW"/>
    <property type="match status" value="1"/>
</dbReference>
<dbReference type="SUPFAM" id="SSF50104">
    <property type="entry name" value="Translation proteins SH3-like domain"/>
    <property type="match status" value="1"/>
</dbReference>
<dbReference type="PROSITE" id="PS01108">
    <property type="entry name" value="RIBOSOMAL_L24"/>
    <property type="match status" value="1"/>
</dbReference>
<gene>
    <name evidence="1" type="primary">rplX</name>
    <name type="ordered locus">LBUL_0361</name>
</gene>
<proteinExistence type="inferred from homology"/>